<sequence length="230" mass="25222">MTSKIIVALDYEKEAEALALVDQIDPSLCRLKVGKEMFTTLGINFVKQLHQRNFDVFLDLKYHDIPNTVARAVRSAADLGVWMVDLHASGGLRMMEEAKKILEPYGKDAPLLIAVTVLTSMEDLDLLQIGINASPMEQVLRLAHLTQRAGLDGVVCSPQEVEILRNACGEDFKLVTPGIRPIGTDFGDQRRVMTPTAAIRAGSDYLVIGRPITQADNPAEVLRSINVSIG</sequence>
<proteinExistence type="inferred from homology"/>
<accession>A5UBN7</accession>
<keyword id="KW-0210">Decarboxylase</keyword>
<keyword id="KW-0456">Lyase</keyword>
<keyword id="KW-0665">Pyrimidine biosynthesis</keyword>
<reference key="1">
    <citation type="journal article" date="2007" name="Genome Biol.">
        <title>Characterization and modeling of the Haemophilus influenzae core and supragenomes based on the complete genomic sequences of Rd and 12 clinical nontypeable strains.</title>
        <authorList>
            <person name="Hogg J.S."/>
            <person name="Hu F.Z."/>
            <person name="Janto B."/>
            <person name="Boissy R."/>
            <person name="Hayes J."/>
            <person name="Keefe R."/>
            <person name="Post J.C."/>
            <person name="Ehrlich G.D."/>
        </authorList>
    </citation>
    <scope>NUCLEOTIDE SEQUENCE [LARGE SCALE GENOMIC DNA]</scope>
    <source>
        <strain>PittEE</strain>
    </source>
</reference>
<organism>
    <name type="scientific">Haemophilus influenzae (strain PittEE)</name>
    <dbReference type="NCBI Taxonomy" id="374930"/>
    <lineage>
        <taxon>Bacteria</taxon>
        <taxon>Pseudomonadati</taxon>
        <taxon>Pseudomonadota</taxon>
        <taxon>Gammaproteobacteria</taxon>
        <taxon>Pasteurellales</taxon>
        <taxon>Pasteurellaceae</taxon>
        <taxon>Haemophilus</taxon>
    </lineage>
</organism>
<dbReference type="EC" id="4.1.1.23" evidence="1"/>
<dbReference type="EMBL" id="CP000671">
    <property type="protein sequence ID" value="ABQ98188.1"/>
    <property type="molecule type" value="Genomic_DNA"/>
</dbReference>
<dbReference type="SMR" id="A5UBN7"/>
<dbReference type="KEGG" id="hip:CGSHiEE_03855"/>
<dbReference type="HOGENOM" id="CLU_067069_0_0_6"/>
<dbReference type="UniPathway" id="UPA00070">
    <property type="reaction ID" value="UER00120"/>
</dbReference>
<dbReference type="GO" id="GO:0005829">
    <property type="term" value="C:cytosol"/>
    <property type="evidence" value="ECO:0007669"/>
    <property type="project" value="TreeGrafter"/>
</dbReference>
<dbReference type="GO" id="GO:0004590">
    <property type="term" value="F:orotidine-5'-phosphate decarboxylase activity"/>
    <property type="evidence" value="ECO:0007669"/>
    <property type="project" value="UniProtKB-UniRule"/>
</dbReference>
<dbReference type="GO" id="GO:0006207">
    <property type="term" value="P:'de novo' pyrimidine nucleobase biosynthetic process"/>
    <property type="evidence" value="ECO:0007669"/>
    <property type="project" value="InterPro"/>
</dbReference>
<dbReference type="GO" id="GO:0044205">
    <property type="term" value="P:'de novo' UMP biosynthetic process"/>
    <property type="evidence" value="ECO:0007669"/>
    <property type="project" value="UniProtKB-UniRule"/>
</dbReference>
<dbReference type="CDD" id="cd04725">
    <property type="entry name" value="OMP_decarboxylase_like"/>
    <property type="match status" value="1"/>
</dbReference>
<dbReference type="FunFam" id="3.20.20.70:FF:000015">
    <property type="entry name" value="Orotidine 5'-phosphate decarboxylase"/>
    <property type="match status" value="1"/>
</dbReference>
<dbReference type="Gene3D" id="3.20.20.70">
    <property type="entry name" value="Aldolase class I"/>
    <property type="match status" value="1"/>
</dbReference>
<dbReference type="HAMAP" id="MF_01200_B">
    <property type="entry name" value="OMPdecase_type1_B"/>
    <property type="match status" value="1"/>
</dbReference>
<dbReference type="InterPro" id="IPR013785">
    <property type="entry name" value="Aldolase_TIM"/>
</dbReference>
<dbReference type="InterPro" id="IPR014732">
    <property type="entry name" value="OMPdecase"/>
</dbReference>
<dbReference type="InterPro" id="IPR018089">
    <property type="entry name" value="OMPdecase_AS"/>
</dbReference>
<dbReference type="InterPro" id="IPR047596">
    <property type="entry name" value="OMPdecase_bac"/>
</dbReference>
<dbReference type="InterPro" id="IPR001754">
    <property type="entry name" value="OMPdeCOase_dom"/>
</dbReference>
<dbReference type="InterPro" id="IPR011060">
    <property type="entry name" value="RibuloseP-bd_barrel"/>
</dbReference>
<dbReference type="NCBIfam" id="NF001273">
    <property type="entry name" value="PRK00230.1"/>
    <property type="match status" value="1"/>
</dbReference>
<dbReference type="NCBIfam" id="TIGR01740">
    <property type="entry name" value="pyrF"/>
    <property type="match status" value="1"/>
</dbReference>
<dbReference type="PANTHER" id="PTHR32119">
    <property type="entry name" value="OROTIDINE 5'-PHOSPHATE DECARBOXYLASE"/>
    <property type="match status" value="1"/>
</dbReference>
<dbReference type="PANTHER" id="PTHR32119:SF2">
    <property type="entry name" value="OROTIDINE 5'-PHOSPHATE DECARBOXYLASE"/>
    <property type="match status" value="1"/>
</dbReference>
<dbReference type="Pfam" id="PF00215">
    <property type="entry name" value="OMPdecase"/>
    <property type="match status" value="1"/>
</dbReference>
<dbReference type="SMART" id="SM00934">
    <property type="entry name" value="OMPdecase"/>
    <property type="match status" value="1"/>
</dbReference>
<dbReference type="SUPFAM" id="SSF51366">
    <property type="entry name" value="Ribulose-phoshate binding barrel"/>
    <property type="match status" value="1"/>
</dbReference>
<dbReference type="PROSITE" id="PS00156">
    <property type="entry name" value="OMPDECASE"/>
    <property type="match status" value="1"/>
</dbReference>
<feature type="chain" id="PRO_1000065911" description="Orotidine 5'-phosphate decarboxylase">
    <location>
        <begin position="1"/>
        <end position="230"/>
    </location>
</feature>
<feature type="active site" description="Proton donor" evidence="1">
    <location>
        <position position="61"/>
    </location>
</feature>
<feature type="binding site" evidence="1">
    <location>
        <position position="10"/>
    </location>
    <ligand>
        <name>substrate</name>
    </ligand>
</feature>
<feature type="binding site" evidence="1">
    <location>
        <position position="32"/>
    </location>
    <ligand>
        <name>substrate</name>
    </ligand>
</feature>
<feature type="binding site" evidence="1">
    <location>
        <begin position="59"/>
        <end position="68"/>
    </location>
    <ligand>
        <name>substrate</name>
    </ligand>
</feature>
<feature type="binding site" evidence="1">
    <location>
        <position position="119"/>
    </location>
    <ligand>
        <name>substrate</name>
    </ligand>
</feature>
<feature type="binding site" evidence="1">
    <location>
        <position position="180"/>
    </location>
    <ligand>
        <name>substrate</name>
    </ligand>
</feature>
<feature type="binding site" evidence="1">
    <location>
        <position position="189"/>
    </location>
    <ligand>
        <name>substrate</name>
    </ligand>
</feature>
<feature type="binding site" evidence="1">
    <location>
        <position position="209"/>
    </location>
    <ligand>
        <name>substrate</name>
    </ligand>
</feature>
<feature type="binding site" evidence="1">
    <location>
        <position position="210"/>
    </location>
    <ligand>
        <name>substrate</name>
    </ligand>
</feature>
<comment type="function">
    <text evidence="1">Catalyzes the decarboxylation of orotidine 5'-monophosphate (OMP) to uridine 5'-monophosphate (UMP).</text>
</comment>
<comment type="catalytic activity">
    <reaction evidence="1">
        <text>orotidine 5'-phosphate + H(+) = UMP + CO2</text>
        <dbReference type="Rhea" id="RHEA:11596"/>
        <dbReference type="ChEBI" id="CHEBI:15378"/>
        <dbReference type="ChEBI" id="CHEBI:16526"/>
        <dbReference type="ChEBI" id="CHEBI:57538"/>
        <dbReference type="ChEBI" id="CHEBI:57865"/>
        <dbReference type="EC" id="4.1.1.23"/>
    </reaction>
</comment>
<comment type="pathway">
    <text evidence="1">Pyrimidine metabolism; UMP biosynthesis via de novo pathway; UMP from orotate: step 2/2.</text>
</comment>
<comment type="subunit">
    <text evidence="1">Homodimer.</text>
</comment>
<comment type="similarity">
    <text evidence="1">Belongs to the OMP decarboxylase family. Type 1 subfamily.</text>
</comment>
<evidence type="ECO:0000255" key="1">
    <source>
        <dbReference type="HAMAP-Rule" id="MF_01200"/>
    </source>
</evidence>
<protein>
    <recommendedName>
        <fullName evidence="1">Orotidine 5'-phosphate decarboxylase</fullName>
        <ecNumber evidence="1">4.1.1.23</ecNumber>
    </recommendedName>
    <alternativeName>
        <fullName evidence="1">OMP decarboxylase</fullName>
        <shortName evidence="1">OMPDCase</shortName>
        <shortName evidence="1">OMPdecase</shortName>
    </alternativeName>
</protein>
<gene>
    <name evidence="1" type="primary">pyrF</name>
    <name type="ordered locus">CGSHiEE_03855</name>
</gene>
<name>PYRF_HAEIE</name>